<sequence>MLWRAGMKWMLLILGSLIGAGYASGQEIWQFFGAESGLAIVLFTIMFIFSSYIVMKISFKVQSTHFLPVLEHLMGPWLAKIYDVLIIFYLFSTTMVMIAGGGVTLQMYKLPFWWGITLICIVTVCLFLWDVKGILSINSILIPVLVAGLLYALISFQSTHHHTWTIDLSQQYNWPASITFTSLNILSVVAILSSVGKEMKGLGEAKIASVASGLIFGVISFVYNETLVELAGSLSQFEIPLFAVLEGAPYFLFLCMTAVLCLAIYTTTVAGLLGLSSRLMAFIHMPRWMIVLILLVLMVPFTSFGFSDLIAFLYPIYGMLNLYLLVCLLLYPILSKWK</sequence>
<accession>P37520</accession>
<protein>
    <recommendedName>
        <fullName>Uncharacterized protein YyaD</fullName>
    </recommendedName>
</protein>
<gene>
    <name type="primary">yyaD</name>
    <name type="ordered locus">BSU40940</name>
</gene>
<organism>
    <name type="scientific">Bacillus subtilis (strain 168)</name>
    <dbReference type="NCBI Taxonomy" id="224308"/>
    <lineage>
        <taxon>Bacteria</taxon>
        <taxon>Bacillati</taxon>
        <taxon>Bacillota</taxon>
        <taxon>Bacilli</taxon>
        <taxon>Bacillales</taxon>
        <taxon>Bacillaceae</taxon>
        <taxon>Bacillus</taxon>
    </lineage>
</organism>
<proteinExistence type="predicted"/>
<feature type="chain" id="PRO_0000050050" description="Uncharacterized protein YyaD">
    <location>
        <begin position="1"/>
        <end position="338"/>
    </location>
</feature>
<name>YYAD_BACSU</name>
<reference key="1">
    <citation type="journal article" date="1992" name="Mol. Microbiol.">
        <title>Genes and their organization in the replication origin region of the bacterial chromosome.</title>
        <authorList>
            <person name="Ogasawara N."/>
            <person name="Yoshikawa H."/>
        </authorList>
    </citation>
    <scope>NUCLEOTIDE SEQUENCE [GENOMIC DNA]</scope>
    <source>
        <strain>168 / CRK2000</strain>
    </source>
</reference>
<reference key="2">
    <citation type="journal article" date="1994" name="DNA Res.">
        <title>Systematic sequencing of the 180 kilobase region of the Bacillus subtilis chromosome containing the replication origin.</title>
        <authorList>
            <person name="Ogasawara N."/>
            <person name="Nakai S."/>
            <person name="Yoshikawa H."/>
        </authorList>
    </citation>
    <scope>NUCLEOTIDE SEQUENCE [GENOMIC DNA]</scope>
    <source>
        <strain>168</strain>
    </source>
</reference>
<reference key="3">
    <citation type="journal article" date="1997" name="Nature">
        <title>The complete genome sequence of the Gram-positive bacterium Bacillus subtilis.</title>
        <authorList>
            <person name="Kunst F."/>
            <person name="Ogasawara N."/>
            <person name="Moszer I."/>
            <person name="Albertini A.M."/>
            <person name="Alloni G."/>
            <person name="Azevedo V."/>
            <person name="Bertero M.G."/>
            <person name="Bessieres P."/>
            <person name="Bolotin A."/>
            <person name="Borchert S."/>
            <person name="Borriss R."/>
            <person name="Boursier L."/>
            <person name="Brans A."/>
            <person name="Braun M."/>
            <person name="Brignell S.C."/>
            <person name="Bron S."/>
            <person name="Brouillet S."/>
            <person name="Bruschi C.V."/>
            <person name="Caldwell B."/>
            <person name="Capuano V."/>
            <person name="Carter N.M."/>
            <person name="Choi S.-K."/>
            <person name="Codani J.-J."/>
            <person name="Connerton I.F."/>
            <person name="Cummings N.J."/>
            <person name="Daniel R.A."/>
            <person name="Denizot F."/>
            <person name="Devine K.M."/>
            <person name="Duesterhoeft A."/>
            <person name="Ehrlich S.D."/>
            <person name="Emmerson P.T."/>
            <person name="Entian K.-D."/>
            <person name="Errington J."/>
            <person name="Fabret C."/>
            <person name="Ferrari E."/>
            <person name="Foulger D."/>
            <person name="Fritz C."/>
            <person name="Fujita M."/>
            <person name="Fujita Y."/>
            <person name="Fuma S."/>
            <person name="Galizzi A."/>
            <person name="Galleron N."/>
            <person name="Ghim S.-Y."/>
            <person name="Glaser P."/>
            <person name="Goffeau A."/>
            <person name="Golightly E.J."/>
            <person name="Grandi G."/>
            <person name="Guiseppi G."/>
            <person name="Guy B.J."/>
            <person name="Haga K."/>
            <person name="Haiech J."/>
            <person name="Harwood C.R."/>
            <person name="Henaut A."/>
            <person name="Hilbert H."/>
            <person name="Holsappel S."/>
            <person name="Hosono S."/>
            <person name="Hullo M.-F."/>
            <person name="Itaya M."/>
            <person name="Jones L.-M."/>
            <person name="Joris B."/>
            <person name="Karamata D."/>
            <person name="Kasahara Y."/>
            <person name="Klaerr-Blanchard M."/>
            <person name="Klein C."/>
            <person name="Kobayashi Y."/>
            <person name="Koetter P."/>
            <person name="Koningstein G."/>
            <person name="Krogh S."/>
            <person name="Kumano M."/>
            <person name="Kurita K."/>
            <person name="Lapidus A."/>
            <person name="Lardinois S."/>
            <person name="Lauber J."/>
            <person name="Lazarevic V."/>
            <person name="Lee S.-M."/>
            <person name="Levine A."/>
            <person name="Liu H."/>
            <person name="Masuda S."/>
            <person name="Mauel C."/>
            <person name="Medigue C."/>
            <person name="Medina N."/>
            <person name="Mellado R.P."/>
            <person name="Mizuno M."/>
            <person name="Moestl D."/>
            <person name="Nakai S."/>
            <person name="Noback M."/>
            <person name="Noone D."/>
            <person name="O'Reilly M."/>
            <person name="Ogawa K."/>
            <person name="Ogiwara A."/>
            <person name="Oudega B."/>
            <person name="Park S.-H."/>
            <person name="Parro V."/>
            <person name="Pohl T.M."/>
            <person name="Portetelle D."/>
            <person name="Porwollik S."/>
            <person name="Prescott A.M."/>
            <person name="Presecan E."/>
            <person name="Pujic P."/>
            <person name="Purnelle B."/>
            <person name="Rapoport G."/>
            <person name="Rey M."/>
            <person name="Reynolds S."/>
            <person name="Rieger M."/>
            <person name="Rivolta C."/>
            <person name="Rocha E."/>
            <person name="Roche B."/>
            <person name="Rose M."/>
            <person name="Sadaie Y."/>
            <person name="Sato T."/>
            <person name="Scanlan E."/>
            <person name="Schleich S."/>
            <person name="Schroeter R."/>
            <person name="Scoffone F."/>
            <person name="Sekiguchi J."/>
            <person name="Sekowska A."/>
            <person name="Seror S.J."/>
            <person name="Serror P."/>
            <person name="Shin B.-S."/>
            <person name="Soldo B."/>
            <person name="Sorokin A."/>
            <person name="Tacconi E."/>
            <person name="Takagi T."/>
            <person name="Takahashi H."/>
            <person name="Takemaru K."/>
            <person name="Takeuchi M."/>
            <person name="Tamakoshi A."/>
            <person name="Tanaka T."/>
            <person name="Terpstra P."/>
            <person name="Tognoni A."/>
            <person name="Tosato V."/>
            <person name="Uchiyama S."/>
            <person name="Vandenbol M."/>
            <person name="Vannier F."/>
            <person name="Vassarotti A."/>
            <person name="Viari A."/>
            <person name="Wambutt R."/>
            <person name="Wedler E."/>
            <person name="Wedler H."/>
            <person name="Weitzenegger T."/>
            <person name="Winters P."/>
            <person name="Wipat A."/>
            <person name="Yamamoto H."/>
            <person name="Yamane K."/>
            <person name="Yasumoto K."/>
            <person name="Yata K."/>
            <person name="Yoshida K."/>
            <person name="Yoshikawa H.-F."/>
            <person name="Zumstein E."/>
            <person name="Yoshikawa H."/>
            <person name="Danchin A."/>
        </authorList>
    </citation>
    <scope>NUCLEOTIDE SEQUENCE [LARGE SCALE GENOMIC DNA]</scope>
    <source>
        <strain>168</strain>
    </source>
</reference>
<keyword id="KW-1185">Reference proteome</keyword>
<dbReference type="EMBL" id="X62539">
    <property type="protein sequence ID" value="CAA44412.1"/>
    <property type="molecule type" value="Genomic_DNA"/>
</dbReference>
<dbReference type="EMBL" id="D26185">
    <property type="protein sequence ID" value="BAA05224.1"/>
    <property type="molecule type" value="Genomic_DNA"/>
</dbReference>
<dbReference type="EMBL" id="AL009126">
    <property type="protein sequence ID" value="CAB16131.1"/>
    <property type="molecule type" value="Genomic_DNA"/>
</dbReference>
<dbReference type="PIR" id="I40448">
    <property type="entry name" value="I40448"/>
</dbReference>
<dbReference type="RefSeq" id="NP_391974.1">
    <property type="nucleotide sequence ID" value="NC_000964.3"/>
</dbReference>
<dbReference type="RefSeq" id="WP_010886647.1">
    <property type="nucleotide sequence ID" value="NZ_OZ025638.1"/>
</dbReference>
<dbReference type="FunCoup" id="P37520">
    <property type="interactions" value="15"/>
</dbReference>
<dbReference type="STRING" id="224308.BSU40940"/>
<dbReference type="TCDB" id="2.A.120.1.9">
    <property type="family name" value="the proline/amino acid permease (paap) family"/>
</dbReference>
<dbReference type="PaxDb" id="224308-BSU40940"/>
<dbReference type="EnsemblBacteria" id="CAB16131">
    <property type="protein sequence ID" value="CAB16131"/>
    <property type="gene ID" value="BSU_40940"/>
</dbReference>
<dbReference type="GeneID" id="937923"/>
<dbReference type="KEGG" id="bsu:BSU40940"/>
<dbReference type="PATRIC" id="fig|224308.43.peg.4302"/>
<dbReference type="eggNOG" id="COG3949">
    <property type="taxonomic scope" value="Bacteria"/>
</dbReference>
<dbReference type="InParanoid" id="P37520"/>
<dbReference type="OrthoDB" id="4424890at2"/>
<dbReference type="PhylomeDB" id="P37520"/>
<dbReference type="BioCyc" id="BSUB:BSU40940-MONOMER"/>
<dbReference type="Proteomes" id="UP000001570">
    <property type="component" value="Chromosome"/>
</dbReference>
<dbReference type="InterPro" id="IPR038728">
    <property type="entry name" value="YkvI"/>
</dbReference>
<dbReference type="PANTHER" id="PTHR37814">
    <property type="entry name" value="CONSERVED MEMBRANE PROTEIN"/>
    <property type="match status" value="1"/>
</dbReference>
<dbReference type="PANTHER" id="PTHR37814:SF1">
    <property type="entry name" value="MEMBRANE PROTEIN"/>
    <property type="match status" value="1"/>
</dbReference>